<protein>
    <recommendedName>
        <fullName evidence="1">UPF0398 protein MGAS10750_Spy1462</fullName>
    </recommendedName>
</protein>
<organism>
    <name type="scientific">Streptococcus pyogenes serotype M4 (strain MGAS10750)</name>
    <dbReference type="NCBI Taxonomy" id="370554"/>
    <lineage>
        <taxon>Bacteria</taxon>
        <taxon>Bacillati</taxon>
        <taxon>Bacillota</taxon>
        <taxon>Bacilli</taxon>
        <taxon>Lactobacillales</taxon>
        <taxon>Streptococcaceae</taxon>
        <taxon>Streptococcus</taxon>
    </lineage>
</organism>
<proteinExistence type="inferred from homology"/>
<accession>Q1J5H4</accession>
<dbReference type="EMBL" id="CP000262">
    <property type="protein sequence ID" value="ABF38412.1"/>
    <property type="molecule type" value="Genomic_DNA"/>
</dbReference>
<dbReference type="SMR" id="Q1J5H4"/>
<dbReference type="KEGG" id="spi:MGAS10750_Spy1462"/>
<dbReference type="HOGENOM" id="CLU_105319_0_0_9"/>
<dbReference type="Proteomes" id="UP000002434">
    <property type="component" value="Chromosome"/>
</dbReference>
<dbReference type="Gene3D" id="3.40.50.450">
    <property type="match status" value="1"/>
</dbReference>
<dbReference type="HAMAP" id="MF_01575">
    <property type="entry name" value="UPF0398"/>
    <property type="match status" value="1"/>
</dbReference>
<dbReference type="InterPro" id="IPR010697">
    <property type="entry name" value="YspA"/>
</dbReference>
<dbReference type="NCBIfam" id="NF010181">
    <property type="entry name" value="PRK13660.1"/>
    <property type="match status" value="1"/>
</dbReference>
<dbReference type="PANTHER" id="PTHR38440:SF1">
    <property type="entry name" value="UPF0398 PROTEIN SPR0331"/>
    <property type="match status" value="1"/>
</dbReference>
<dbReference type="PANTHER" id="PTHR38440">
    <property type="entry name" value="UPF0398 PROTEIN YPSA"/>
    <property type="match status" value="1"/>
</dbReference>
<dbReference type="Pfam" id="PF06908">
    <property type="entry name" value="YpsA"/>
    <property type="match status" value="1"/>
</dbReference>
<dbReference type="PIRSF" id="PIRSF021290">
    <property type="entry name" value="DUF1273"/>
    <property type="match status" value="1"/>
</dbReference>
<dbReference type="SUPFAM" id="SSF102405">
    <property type="entry name" value="MCP/YpsA-like"/>
    <property type="match status" value="1"/>
</dbReference>
<gene>
    <name type="ordered locus">MGAS10750_Spy1462</name>
</gene>
<feature type="chain" id="PRO_0000267194" description="UPF0398 protein MGAS10750_Spy1462">
    <location>
        <begin position="1"/>
        <end position="171"/>
    </location>
</feature>
<reference key="1">
    <citation type="journal article" date="2006" name="Proc. Natl. Acad. Sci. U.S.A.">
        <title>Molecular genetic anatomy of inter- and intraserotype variation in the human bacterial pathogen group A Streptococcus.</title>
        <authorList>
            <person name="Beres S.B."/>
            <person name="Richter E.W."/>
            <person name="Nagiec M.J."/>
            <person name="Sumby P."/>
            <person name="Porcella S.F."/>
            <person name="DeLeo F.R."/>
            <person name="Musser J.M."/>
        </authorList>
    </citation>
    <scope>NUCLEOTIDE SEQUENCE [LARGE SCALE GENOMIC DNA]</scope>
    <source>
        <strain>MGAS10750</strain>
    </source>
</reference>
<evidence type="ECO:0000255" key="1">
    <source>
        <dbReference type="HAMAP-Rule" id="MF_01575"/>
    </source>
</evidence>
<name>Y1462_STRPF</name>
<sequence>MTAILITGYRSFEIGIFDHKDPRVSIIKQAIRKDLIGYLENGVDWFIFTGNLGFEQWALEVANELKEEYPLQIATIFLFETHGDRWNEKNQEVLSQFRAVDFVKYYFPNYEQPTQFSQYYQFLLEKTEGAYVFYDTENETNLKYFLKKAKDMPHYQLLLLTFDRLNDMSQS</sequence>
<comment type="similarity">
    <text evidence="1">Belongs to the UPF0398 family.</text>
</comment>